<evidence type="ECO:0000250" key="1"/>
<evidence type="ECO:0000255" key="2">
    <source>
        <dbReference type="PROSITE-ProRule" id="PRU00176"/>
    </source>
</evidence>
<evidence type="ECO:0000256" key="3">
    <source>
        <dbReference type="SAM" id="MobiDB-lite"/>
    </source>
</evidence>
<evidence type="ECO:0000305" key="4"/>
<comment type="function">
    <text evidence="1">Component of a splicing-dependent multiprotein exon junction complex (EJC) deposited at splice junction on mRNAs. The EJC is a dynamic structure consisting of a few core proteins and several more peripheral nuclear and cytoplasmic associated factors that join the complex only transiently either during EJC assembly or during subsequent mRNA metabolism. Putative component of the spliceosome which enhances the formation of the ATP-dependent A complex of the spliceosome. May participate in mRNA 3'-end cleavage. Also mediates increase of mRNA abundance and translational efficiency (By similarity).</text>
</comment>
<comment type="subunit">
    <text evidence="1">Component of the active spliceosome.</text>
</comment>
<comment type="subcellular location">
    <subcellularLocation>
        <location evidence="1">Nucleus</location>
    </subcellularLocation>
    <subcellularLocation>
        <location evidence="1">Nucleus speckle</location>
    </subcellularLocation>
    <subcellularLocation>
        <location evidence="1">Cytoplasm</location>
    </subcellularLocation>
    <text evidence="1">Nucleocytoplasmic shuttling protein.</text>
</comment>
<comment type="similarity">
    <text evidence="4">Belongs to the splicing factor SR family.</text>
</comment>
<gene>
    <name type="primary">rnps1</name>
    <name type="ORF">wu:fa19a11</name>
    <name type="ORF">zgc:65775</name>
</gene>
<name>RNPS1_DANRE</name>
<organism>
    <name type="scientific">Danio rerio</name>
    <name type="common">Zebrafish</name>
    <name type="synonym">Brachydanio rerio</name>
    <dbReference type="NCBI Taxonomy" id="7955"/>
    <lineage>
        <taxon>Eukaryota</taxon>
        <taxon>Metazoa</taxon>
        <taxon>Chordata</taxon>
        <taxon>Craniata</taxon>
        <taxon>Vertebrata</taxon>
        <taxon>Euteleostomi</taxon>
        <taxon>Actinopterygii</taxon>
        <taxon>Neopterygii</taxon>
        <taxon>Teleostei</taxon>
        <taxon>Ostariophysi</taxon>
        <taxon>Cypriniformes</taxon>
        <taxon>Danionidae</taxon>
        <taxon>Danioninae</taxon>
        <taxon>Danio</taxon>
    </lineage>
</organism>
<dbReference type="EMBL" id="BC057251">
    <property type="protein sequence ID" value="AAH57251.1"/>
    <property type="molecule type" value="mRNA"/>
</dbReference>
<dbReference type="EMBL" id="BC065953">
    <property type="protein sequence ID" value="AAH65953.1"/>
    <property type="molecule type" value="mRNA"/>
</dbReference>
<dbReference type="RefSeq" id="NP_956055.1">
    <property type="nucleotide sequence ID" value="NM_199761.1"/>
</dbReference>
<dbReference type="SMR" id="Q6PG31"/>
<dbReference type="FunCoup" id="Q6PG31">
    <property type="interactions" value="90"/>
</dbReference>
<dbReference type="STRING" id="7955.ENSDARP00000131565"/>
<dbReference type="PaxDb" id="7955-ENSDARP00000111476"/>
<dbReference type="GeneID" id="327020"/>
<dbReference type="KEGG" id="dre:137487191"/>
<dbReference type="KEGG" id="dre:327020"/>
<dbReference type="AGR" id="ZFIN:ZDB-GENE-030131-5228"/>
<dbReference type="CTD" id="10921"/>
<dbReference type="ZFIN" id="ZDB-GENE-030131-5228">
    <property type="gene designation" value="rnps1"/>
</dbReference>
<dbReference type="eggNOG" id="KOG4209">
    <property type="taxonomic scope" value="Eukaryota"/>
</dbReference>
<dbReference type="HOGENOM" id="CLU_076438_0_0_1"/>
<dbReference type="InParanoid" id="Q6PG31"/>
<dbReference type="OrthoDB" id="252020at2759"/>
<dbReference type="TreeFam" id="TF314165"/>
<dbReference type="Reactome" id="R-DRE-975957">
    <property type="pathway name" value="Nonsense Mediated Decay (NMD) enhanced by the Exon Junction Complex (EJC)"/>
</dbReference>
<dbReference type="PRO" id="PR:Q6PG31"/>
<dbReference type="Proteomes" id="UP000000437">
    <property type="component" value="Alternate scaffold 3"/>
</dbReference>
<dbReference type="Proteomes" id="UP000000437">
    <property type="component" value="Chromosome 3"/>
</dbReference>
<dbReference type="GO" id="GO:0061574">
    <property type="term" value="C:ASAP complex"/>
    <property type="evidence" value="ECO:0000318"/>
    <property type="project" value="GO_Central"/>
</dbReference>
<dbReference type="GO" id="GO:0005737">
    <property type="term" value="C:cytoplasm"/>
    <property type="evidence" value="ECO:0000318"/>
    <property type="project" value="GO_Central"/>
</dbReference>
<dbReference type="GO" id="GO:0016607">
    <property type="term" value="C:nuclear speck"/>
    <property type="evidence" value="ECO:0007669"/>
    <property type="project" value="UniProtKB-SubCell"/>
</dbReference>
<dbReference type="GO" id="GO:0005654">
    <property type="term" value="C:nucleoplasm"/>
    <property type="evidence" value="ECO:0000318"/>
    <property type="project" value="GO_Central"/>
</dbReference>
<dbReference type="GO" id="GO:0003723">
    <property type="term" value="F:RNA binding"/>
    <property type="evidence" value="ECO:0007669"/>
    <property type="project" value="UniProtKB-KW"/>
</dbReference>
<dbReference type="GO" id="GO:0000398">
    <property type="term" value="P:mRNA splicing, via spliceosome"/>
    <property type="evidence" value="ECO:0000318"/>
    <property type="project" value="GO_Central"/>
</dbReference>
<dbReference type="CDD" id="cd12365">
    <property type="entry name" value="RRM_RNPS1"/>
    <property type="match status" value="1"/>
</dbReference>
<dbReference type="FunFam" id="3.30.70.330:FF:001315">
    <property type="entry name" value="RNA-binding protein with serine-rich domain 1"/>
    <property type="match status" value="1"/>
</dbReference>
<dbReference type="Gene3D" id="3.30.70.330">
    <property type="match status" value="1"/>
</dbReference>
<dbReference type="InterPro" id="IPR012677">
    <property type="entry name" value="Nucleotide-bd_a/b_plait_sf"/>
</dbReference>
<dbReference type="InterPro" id="IPR035979">
    <property type="entry name" value="RBD_domain_sf"/>
</dbReference>
<dbReference type="InterPro" id="IPR034201">
    <property type="entry name" value="RNPS1_RRM"/>
</dbReference>
<dbReference type="InterPro" id="IPR000504">
    <property type="entry name" value="RRM_dom"/>
</dbReference>
<dbReference type="InterPro" id="IPR003954">
    <property type="entry name" value="RRM_dom_euk"/>
</dbReference>
<dbReference type="PANTHER" id="PTHR15481">
    <property type="entry name" value="RIBONUCLEIC ACID BINDING PROTEIN S1"/>
    <property type="match status" value="1"/>
</dbReference>
<dbReference type="PANTHER" id="PTHR15481:SF2">
    <property type="entry name" value="RNA-BINDING PROTEIN WITH SERINE-RICH DOMAIN 1"/>
    <property type="match status" value="1"/>
</dbReference>
<dbReference type="Pfam" id="PF00076">
    <property type="entry name" value="RRM_1"/>
    <property type="match status" value="1"/>
</dbReference>
<dbReference type="SMART" id="SM00360">
    <property type="entry name" value="RRM"/>
    <property type="match status" value="1"/>
</dbReference>
<dbReference type="SMART" id="SM00361">
    <property type="entry name" value="RRM_1"/>
    <property type="match status" value="1"/>
</dbReference>
<dbReference type="SUPFAM" id="SSF54928">
    <property type="entry name" value="RNA-binding domain, RBD"/>
    <property type="match status" value="1"/>
</dbReference>
<dbReference type="PROSITE" id="PS50102">
    <property type="entry name" value="RRM"/>
    <property type="match status" value="1"/>
</dbReference>
<keyword id="KW-0963">Cytoplasm</keyword>
<keyword id="KW-0507">mRNA processing</keyword>
<keyword id="KW-0508">mRNA splicing</keyword>
<keyword id="KW-0539">Nucleus</keyword>
<keyword id="KW-1185">Reference proteome</keyword>
<keyword id="KW-0694">RNA-binding</keyword>
<accession>Q6PG31</accession>
<accession>Q6NZV7</accession>
<protein>
    <recommendedName>
        <fullName>RNA-binding protein with serine-rich domain 1</fullName>
    </recommendedName>
</protein>
<proteinExistence type="evidence at transcript level"/>
<sequence>MAPSPTKRRERSEDKPRERGKEKAPAKEGAEKERGRDKIRKRRSNSTGSSSSRSSSSSSSSSGSSSGSSSGSSSSSGSSRSGSSSSSRSSSSSGSSGSPSPSRRRHDNRRRSRSKSKSQKRTDEKERKRRSPSPKPTKLYLGRLTRNVTKDHIQEIFATYGKIKMIDMPSDRLHPNVSKGYAYVEYESPEDAQKALKHMDGGQIDGQEITATAILAQRIRPAPRRLSPPRRMPPPPPMWRRTPPRMRRRSRSPRRRSPVRRRSRSRSPGRRRHRSRSSSNSSR</sequence>
<reference key="1">
    <citation type="submission" date="2003-08" db="EMBL/GenBank/DDBJ databases">
        <authorList>
            <consortium name="NIH - Zebrafish Gene Collection (ZGC) project"/>
        </authorList>
    </citation>
    <scope>NUCLEOTIDE SEQUENCE [LARGE SCALE MRNA]</scope>
    <source>
        <tissue>Embryo</tissue>
    </source>
</reference>
<feature type="chain" id="PRO_0000378575" description="RNA-binding protein with serine-rich domain 1">
    <location>
        <begin position="1"/>
        <end position="283"/>
    </location>
</feature>
<feature type="domain" description="RRM" evidence="2">
    <location>
        <begin position="137"/>
        <end position="216"/>
    </location>
</feature>
<feature type="region of interest" description="Disordered" evidence="3">
    <location>
        <begin position="1"/>
        <end position="141"/>
    </location>
</feature>
<feature type="region of interest" description="Disordered" evidence="3">
    <location>
        <begin position="217"/>
        <end position="283"/>
    </location>
</feature>
<feature type="compositionally biased region" description="Basic and acidic residues" evidence="3">
    <location>
        <begin position="10"/>
        <end position="36"/>
    </location>
</feature>
<feature type="compositionally biased region" description="Low complexity" evidence="3">
    <location>
        <begin position="45"/>
        <end position="101"/>
    </location>
</feature>
<feature type="compositionally biased region" description="Basic residues" evidence="3">
    <location>
        <begin position="102"/>
        <end position="119"/>
    </location>
</feature>
<feature type="compositionally biased region" description="Basic residues" evidence="3">
    <location>
        <begin position="242"/>
        <end position="276"/>
    </location>
</feature>
<feature type="sequence conflict" description="In Ref. 1; AAH65953." evidence="4" ref="1">
    <original>S</original>
    <variation>N</variation>
    <location>
        <position position="44"/>
    </location>
</feature>